<sequence>MARGSALLLASLLLAAALSASAGLWSPAKEKRGWTLNSAGYLLGPHAVGNHRSFSDKNGLTSKRELRPEDDMKPGSFDRSIPENNIMRTIIEFLSFLHLKEAGALDRLLDLPAAASSEDIERS</sequence>
<organism>
    <name type="scientific">Homo sapiens</name>
    <name type="common">Human</name>
    <dbReference type="NCBI Taxonomy" id="9606"/>
    <lineage>
        <taxon>Eukaryota</taxon>
        <taxon>Metazoa</taxon>
        <taxon>Chordata</taxon>
        <taxon>Craniata</taxon>
        <taxon>Vertebrata</taxon>
        <taxon>Euteleostomi</taxon>
        <taxon>Mammalia</taxon>
        <taxon>Eutheria</taxon>
        <taxon>Euarchontoglires</taxon>
        <taxon>Primates</taxon>
        <taxon>Haplorrhini</taxon>
        <taxon>Catarrhini</taxon>
        <taxon>Hominidae</taxon>
        <taxon>Homo</taxon>
    </lineage>
</organism>
<comment type="function">
    <text evidence="3 5 6">Endocrine hormone of the central and peripheral nervous systems that binds and activates the G protein-coupled receptors GALR1, GALR2, and GALR3. This small neuropeptide may regulate diverse physiologic functions including contraction of smooth muscle of the gastrointestinal and genitourinary tract, growth hormone and insulin release and adrenal secretion.</text>
</comment>
<comment type="interaction">
    <interactant intactId="EBI-6624768">
        <id>P22466</id>
    </interactant>
    <interactant intactId="EBI-296087">
        <id>P31749</id>
        <label>AKT1</label>
    </interactant>
    <organismsDiffer>false</organismsDiffer>
    <experiments>3</experiments>
</comment>
<comment type="interaction">
    <interactant intactId="EBI-6624768">
        <id>P22466</id>
    </interactant>
    <interactant intactId="EBI-12092171">
        <id>Q12797-6</id>
        <label>ASPH</label>
    </interactant>
    <organismsDiffer>false</organismsDiffer>
    <experiments>3</experiments>
</comment>
<comment type="interaction">
    <interactant intactId="EBI-6624768">
        <id>P22466</id>
    </interactant>
    <interactant intactId="EBI-12275524">
        <id>P23560-2</id>
        <label>BDNF</label>
    </interactant>
    <organismsDiffer>false</organismsDiffer>
    <experiments>3</experiments>
</comment>
<comment type="interaction">
    <interactant intactId="EBI-6624768">
        <id>P22466</id>
    </interactant>
    <interactant intactId="EBI-740135">
        <id>P35520</id>
        <label>CBS</label>
    </interactant>
    <organismsDiffer>false</organismsDiffer>
    <experiments>3</experiments>
</comment>
<comment type="interaction">
    <interactant intactId="EBI-6624768">
        <id>P22466</id>
    </interactant>
    <interactant intactId="EBI-347996">
        <id>O43765</id>
        <label>SGTA</label>
    </interactant>
    <organismsDiffer>false</organismsDiffer>
    <experiments>6</experiments>
</comment>
<comment type="interaction">
    <interactant intactId="EBI-6624768">
        <id>P22466</id>
    </interactant>
    <interactant intactId="EBI-357085">
        <id>Q9UNE7</id>
        <label>STUB1</label>
    </interactant>
    <organismsDiffer>false</organismsDiffer>
    <experiments>3</experiments>
</comment>
<comment type="interaction">
    <interactant intactId="EBI-6624768">
        <id>P22466</id>
    </interactant>
    <interactant intactId="EBI-741480">
        <id>Q9UMX0</id>
        <label>UBQLN1</label>
    </interactant>
    <organismsDiffer>false</organismsDiffer>
    <experiments>3</experiments>
</comment>
<comment type="interaction">
    <interactant intactId="EBI-6624768">
        <id>P22466</id>
    </interactant>
    <interactant intactId="EBI-947187">
        <id>Q9UHD9</id>
        <label>UBQLN2</label>
    </interactant>
    <organismsDiffer>false</organismsDiffer>
    <experiments>3</experiments>
</comment>
<comment type="interaction">
    <interactant intactId="EBI-6624800">
        <id>PRO_0000010449</id>
    </interactant>
    <interactant intactId="EBI-6624741">
        <id>P47211</id>
        <label>GALR1</label>
    </interactant>
    <organismsDiffer>false</organismsDiffer>
    <experiments>2</experiments>
</comment>
<comment type="interaction">
    <interactant intactId="EBI-6624800">
        <id>PRO_0000010449</id>
    </interactant>
    <interactant intactId="EBI-6624855">
        <id>O43603</id>
        <label>GALR2</label>
    </interactant>
    <organismsDiffer>false</organismsDiffer>
    <experiments>2</experiments>
</comment>
<comment type="subcellular location">
    <subcellularLocation>
        <location evidence="3 5">Secreted</location>
    </subcellularLocation>
</comment>
<comment type="disease" evidence="6">
    <disease id="DI-04482">
        <name>Epilepsy, familial temporal lobe, 8</name>
        <acronym>ETL8</acronym>
        <description>A focal form of epilepsy characterized by recurrent seizures that arise from foci within the temporal lobe. Seizures are usually accompanied by sensory symptoms, most often auditory in nature.</description>
        <dbReference type="MIM" id="616461"/>
    </disease>
    <text>The disease is caused by variants affecting the gene represented in this entry.</text>
</comment>
<comment type="similarity">
    <text evidence="7">Belongs to the galanin family.</text>
</comment>
<reference key="1">
    <citation type="journal article" date="1993" name="Genomics">
        <title>Genomic organization and localization of the gene encoding human preprogalanin.</title>
        <authorList>
            <person name="Evans H."/>
            <person name="Baumgartner M."/>
            <person name="Shine J."/>
            <person name="Herzog H."/>
        </authorList>
    </citation>
    <scope>NUCLEOTIDE SEQUENCE [GENOMIC DNA] OF 1-45</scope>
    <source>
        <tissue>Blood</tissue>
    </source>
</reference>
<reference key="2">
    <citation type="journal article" date="1992" name="Diabetes">
        <title>Sequence of human galanin and its inhibition of glucose-stimulated insulin secretion from RIN cells.</title>
        <authorList>
            <person name="McKnight G.L."/>
            <person name="Karlsen A.E."/>
            <person name="Kowalyk S."/>
            <person name="Mathewes S.L."/>
            <person name="Sheppard P.O."/>
            <person name="O'Hara P.J."/>
            <person name="Taborsky G.L."/>
        </authorList>
    </citation>
    <scope>NUCLEOTIDE SEQUENCE [MRNA] OF 16-123</scope>
    <scope>FUNCTION</scope>
    <scope>SUBCELLULAR LOCATION</scope>
</reference>
<reference key="3">
    <citation type="journal article" date="2004" name="Genome Res.">
        <title>The status, quality, and expansion of the NIH full-length cDNA project: the Mammalian Gene Collection (MGC).</title>
        <authorList>
            <consortium name="The MGC Project Team"/>
        </authorList>
    </citation>
    <scope>NUCLEOTIDE SEQUENCE [LARGE SCALE MRNA]</scope>
    <source>
        <tissue>Cervix</tissue>
    </source>
</reference>
<reference key="4">
    <citation type="journal article" date="1991" name="FEBS Lett.">
        <title>Human galanin: primary structure and identification of two molecular forms.</title>
        <authorList>
            <person name="Bersani M."/>
            <person name="Johnsen A.H."/>
            <person name="Hoejrup P."/>
            <person name="Dunning B.E."/>
            <person name="Andreasen J.J."/>
            <person name="Holst J.J."/>
        </authorList>
    </citation>
    <scope>PROTEIN SEQUENCE OF 33-62</scope>
</reference>
<reference key="5">
    <citation type="journal article" date="1991" name="Proc. Natl. Acad. Sci. U.S.A.">
        <title>Isolation and primary structure of pituitary human galanin, a 30-residue nonamidated neuropeptide.</title>
        <authorList>
            <person name="Schmidt W.E."/>
            <person name="Kratzin H."/>
            <person name="Eckart K."/>
            <person name="Drevs D."/>
            <person name="Mundkowski G."/>
            <person name="Clemens A."/>
            <person name="Katsoulis S."/>
            <person name="Schaefer H."/>
            <person name="Gallwitz B."/>
            <person name="Creutzfeldt W."/>
        </authorList>
    </citation>
    <scope>PROTEIN SEQUENCE OF 33-62</scope>
    <scope>SYNTHESIS</scope>
    <scope>FUNCTION</scope>
    <scope>SUBCELLULAR LOCATION</scope>
    <source>
        <tissue>Pituitary</tissue>
    </source>
</reference>
<reference key="6">
    <citation type="journal article" date="2004" name="Proteomics">
        <title>Identification and characterization of phosphorylated proteins in the human pituitary.</title>
        <authorList>
            <person name="Giorgianni F."/>
            <person name="Beranova-Giorgianni S."/>
            <person name="Desiderio D.M."/>
        </authorList>
    </citation>
    <scope>PHOSPHORYLATION AT SER-117</scope>
    <source>
        <tissue>Pituitary</tissue>
    </source>
</reference>
<reference key="7">
    <citation type="journal article" date="2006" name="Pituitary">
        <title>Phosphoproteomic analysis of the human pituitary.</title>
        <authorList>
            <person name="Beranova-Giorgianni S."/>
            <person name="Zhao Y."/>
            <person name="Desiderio D.M."/>
            <person name="Giorgianni F."/>
        </authorList>
    </citation>
    <scope>IDENTIFICATION BY MASS SPECTROMETRY [LARGE SCALE ANALYSIS]</scope>
    <source>
        <tissue>Pituitary</tissue>
    </source>
</reference>
<reference key="8">
    <citation type="journal article" date="2008" name="Proc. Natl. Acad. Sci. U.S.A.">
        <title>A quantitative atlas of mitotic phosphorylation.</title>
        <authorList>
            <person name="Dephoure N."/>
            <person name="Zhou C."/>
            <person name="Villen J."/>
            <person name="Beausoleil S.A."/>
            <person name="Bakalarski C.E."/>
            <person name="Elledge S.J."/>
            <person name="Gygi S.P."/>
        </authorList>
    </citation>
    <scope>IDENTIFICATION BY MASS SPECTROMETRY [LARGE SCALE ANALYSIS]</scope>
    <source>
        <tissue>Cervix carcinoma</tissue>
    </source>
</reference>
<reference key="9">
    <citation type="journal article" date="2011" name="Sci. Signal.">
        <title>System-wide temporal characterization of the proteome and phosphoproteome of human embryonic stem cell differentiation.</title>
        <authorList>
            <person name="Rigbolt K.T."/>
            <person name="Prokhorova T.A."/>
            <person name="Akimov V."/>
            <person name="Henningsen J."/>
            <person name="Johansen P.T."/>
            <person name="Kratchmarova I."/>
            <person name="Kassem M."/>
            <person name="Mann M."/>
            <person name="Olsen J.V."/>
            <person name="Blagoev B."/>
        </authorList>
    </citation>
    <scope>PHOSPHORYLATION [LARGE SCALE ANALYSIS] AT SER-117</scope>
    <scope>IDENTIFICATION BY MASS SPECTROMETRY [LARGE SCALE ANALYSIS]</scope>
</reference>
<reference key="10">
    <citation type="journal article" date="2013" name="J. Proteome Res.">
        <title>Toward a comprehensive characterization of a human cancer cell phosphoproteome.</title>
        <authorList>
            <person name="Zhou H."/>
            <person name="Di Palma S."/>
            <person name="Preisinger C."/>
            <person name="Peng M."/>
            <person name="Polat A.N."/>
            <person name="Heck A.J."/>
            <person name="Mohammed S."/>
        </authorList>
    </citation>
    <scope>PHOSPHORYLATION [LARGE SCALE ANALYSIS] AT SER-116</scope>
    <scope>IDENTIFICATION BY MASS SPECTROMETRY [LARGE SCALE ANALYSIS]</scope>
    <source>
        <tissue>Cervix carcinoma</tissue>
    </source>
</reference>
<reference key="11">
    <citation type="journal article" date="2014" name="J. Proteomics">
        <title>An enzyme assisted RP-RPLC approach for in-depth analysis of human liver phosphoproteome.</title>
        <authorList>
            <person name="Bian Y."/>
            <person name="Song C."/>
            <person name="Cheng K."/>
            <person name="Dong M."/>
            <person name="Wang F."/>
            <person name="Huang J."/>
            <person name="Sun D."/>
            <person name="Wang L."/>
            <person name="Ye M."/>
            <person name="Zou H."/>
        </authorList>
    </citation>
    <scope>IDENTIFICATION BY MASS SPECTROMETRY [LARGE SCALE ANALYSIS]</scope>
    <source>
        <tissue>Liver</tissue>
    </source>
</reference>
<reference key="12">
    <citation type="journal article" date="2015" name="Hum. Mol. Genet.">
        <title>Galanin pathogenic mutations in temporal lobe epilepsy.</title>
        <authorList>
            <person name="Guipponi M."/>
            <person name="Chentouf A."/>
            <person name="Webling K.E."/>
            <person name="Freimann K."/>
            <person name="Crespel A."/>
            <person name="Nobile C."/>
            <person name="Lemke J.R."/>
            <person name="Hansen J."/>
            <person name="Dorn T."/>
            <person name="Lesca G."/>
            <person name="Ryvlin P."/>
            <person name="Hirsch E."/>
            <person name="Rudolf G."/>
            <person name="Rosenberg D.S."/>
            <person name="Weber Y."/>
            <person name="Becker F."/>
            <person name="Helbig I."/>
            <person name="Muhle H."/>
            <person name="Salzmann A."/>
            <person name="Chaouch M."/>
            <person name="Oubaiche M.L."/>
            <person name="Ziglio S."/>
            <person name="Gehrig C."/>
            <person name="Santoni F."/>
            <person name="Pizzato M."/>
            <person name="Langel U."/>
            <person name="Antonarakis S.E."/>
        </authorList>
    </citation>
    <scope>FUNCTION</scope>
    <scope>INVOLVEMENT IN ETL8</scope>
    <scope>VARIANT ETL8 GLU-39</scope>
    <scope>CHARACTERIZATION OF VARIANT ETL8 GLU-39</scope>
</reference>
<protein>
    <recommendedName>
        <fullName>Galanin peptides</fullName>
    </recommendedName>
    <component>
        <recommendedName>
            <fullName>Galanin</fullName>
        </recommendedName>
    </component>
    <component>
        <recommendedName>
            <fullName>Galanin message-associated peptide</fullName>
            <shortName>GMAP</shortName>
        </recommendedName>
    </component>
</protein>
<keyword id="KW-0002">3D-structure</keyword>
<keyword id="KW-0165">Cleavage on pair of basic residues</keyword>
<keyword id="KW-0903">Direct protein sequencing</keyword>
<keyword id="KW-0225">Disease variant</keyword>
<keyword id="KW-0887">Epilepsy</keyword>
<keyword id="KW-0372">Hormone</keyword>
<keyword id="KW-0527">Neuropeptide</keyword>
<keyword id="KW-0597">Phosphoprotein</keyword>
<keyword id="KW-1267">Proteomics identification</keyword>
<keyword id="KW-1185">Reference proteome</keyword>
<keyword id="KW-0964">Secreted</keyword>
<keyword id="KW-0732">Signal</keyword>
<proteinExistence type="evidence at protein level"/>
<accession>P22466</accession>
<accession>Q14413</accession>
<gene>
    <name type="primary">GAL</name>
    <name type="synonym">GAL1</name>
    <name type="synonym">GALN</name>
    <name type="synonym">GLNN</name>
</gene>
<evidence type="ECO:0000255" key="1"/>
<evidence type="ECO:0000256" key="2">
    <source>
        <dbReference type="SAM" id="MobiDB-lite"/>
    </source>
</evidence>
<evidence type="ECO:0000269" key="3">
    <source>
    </source>
</evidence>
<evidence type="ECO:0000269" key="4">
    <source>
    </source>
</evidence>
<evidence type="ECO:0000269" key="5">
    <source>
    </source>
</evidence>
<evidence type="ECO:0000269" key="6">
    <source>
    </source>
</evidence>
<evidence type="ECO:0000305" key="7"/>
<evidence type="ECO:0007744" key="8">
    <source>
    </source>
</evidence>
<evidence type="ECO:0007744" key="9">
    <source>
    </source>
</evidence>
<evidence type="ECO:0007829" key="10">
    <source>
        <dbReference type="PDB" id="7WQ4"/>
    </source>
</evidence>
<evidence type="ECO:0007829" key="11">
    <source>
        <dbReference type="PDB" id="7XJJ"/>
    </source>
</evidence>
<dbReference type="EMBL" id="L11144">
    <property type="protein sequence ID" value="AAA18248.1"/>
    <property type="molecule type" value="Genomic_DNA"/>
</dbReference>
<dbReference type="EMBL" id="M77140">
    <property type="protein sequence ID" value="AAA60178.1"/>
    <property type="molecule type" value="mRNA"/>
</dbReference>
<dbReference type="EMBL" id="BC030241">
    <property type="protein sequence ID" value="AAH30241.1"/>
    <property type="molecule type" value="mRNA"/>
</dbReference>
<dbReference type="CCDS" id="CCDS8183.1"/>
<dbReference type="PIR" id="A49353">
    <property type="entry name" value="RHHUN"/>
</dbReference>
<dbReference type="RefSeq" id="NP_057057.2">
    <property type="nucleotide sequence ID" value="NM_015973.4"/>
</dbReference>
<dbReference type="PDB" id="7S3O">
    <property type="method" value="NMR"/>
    <property type="chains" value="A=34-46"/>
</dbReference>
<dbReference type="PDB" id="7S3Q">
    <property type="method" value="NMR"/>
    <property type="chains" value="A=33-46"/>
</dbReference>
<dbReference type="PDB" id="7S3R">
    <property type="method" value="NMR"/>
    <property type="chains" value="A=33-50"/>
</dbReference>
<dbReference type="PDB" id="7WQ3">
    <property type="method" value="EM"/>
    <property type="resolution" value="2.70 A"/>
    <property type="chains" value="L=33-62"/>
</dbReference>
<dbReference type="PDB" id="7WQ4">
    <property type="method" value="EM"/>
    <property type="resolution" value="2.60 A"/>
    <property type="chains" value="L=33-62"/>
</dbReference>
<dbReference type="PDB" id="7XBD">
    <property type="method" value="EM"/>
    <property type="resolution" value="3.11 A"/>
    <property type="chains" value="F=33-62"/>
</dbReference>
<dbReference type="PDB" id="7XJJ">
    <property type="method" value="EM"/>
    <property type="resolution" value="3.30 A"/>
    <property type="chains" value="C=33-62"/>
</dbReference>
<dbReference type="PDB" id="7XJK">
    <property type="method" value="EM"/>
    <property type="resolution" value="3.30 A"/>
    <property type="chains" value="A=33-62"/>
</dbReference>
<dbReference type="PDB" id="8DHZ">
    <property type="method" value="NMR"/>
    <property type="chains" value="A=49-62"/>
</dbReference>
<dbReference type="PDB" id="8DJ4">
    <property type="method" value="NMR"/>
    <property type="chains" value="A=33-62"/>
</dbReference>
<dbReference type="PDBsum" id="7S3O"/>
<dbReference type="PDBsum" id="7S3Q"/>
<dbReference type="PDBsum" id="7S3R"/>
<dbReference type="PDBsum" id="7WQ3"/>
<dbReference type="PDBsum" id="7WQ4"/>
<dbReference type="PDBsum" id="7XBD"/>
<dbReference type="PDBsum" id="7XJJ"/>
<dbReference type="PDBsum" id="7XJK"/>
<dbReference type="PDBsum" id="8DHZ"/>
<dbReference type="PDBsum" id="8DJ4"/>
<dbReference type="EMDB" id="EMD-32698"/>
<dbReference type="EMDB" id="EMD-32699"/>
<dbReference type="EMDB" id="EMD-33103"/>
<dbReference type="EMDB" id="EMD-33229"/>
<dbReference type="EMDB" id="EMD-33230"/>
<dbReference type="SMR" id="P22466"/>
<dbReference type="BioGRID" id="119273">
    <property type="interactions" value="25"/>
</dbReference>
<dbReference type="FunCoup" id="P22466">
    <property type="interactions" value="569"/>
</dbReference>
<dbReference type="IntAct" id="P22466">
    <property type="interactions" value="29"/>
</dbReference>
<dbReference type="MINT" id="P22466"/>
<dbReference type="STRING" id="9606.ENSP00000265643"/>
<dbReference type="BindingDB" id="P22466"/>
<dbReference type="GlyGen" id="P22466">
    <property type="glycosylation" value="3 sites, 1 O-linked glycan (2 sites)"/>
</dbReference>
<dbReference type="iPTMnet" id="P22466"/>
<dbReference type="PhosphoSitePlus" id="P22466"/>
<dbReference type="BioMuta" id="GAL"/>
<dbReference type="DMDM" id="2506449"/>
<dbReference type="jPOST" id="P22466"/>
<dbReference type="MassIVE" id="P22466"/>
<dbReference type="PaxDb" id="9606-ENSP00000265643"/>
<dbReference type="PeptideAtlas" id="P22466"/>
<dbReference type="ProteomicsDB" id="53995"/>
<dbReference type="Pumba" id="P22466"/>
<dbReference type="ABCD" id="P22466">
    <property type="antibodies" value="16 sequenced antibodies"/>
</dbReference>
<dbReference type="Antibodypedia" id="30599">
    <property type="antibodies" value="357 antibodies from 36 providers"/>
</dbReference>
<dbReference type="DNASU" id="51083"/>
<dbReference type="Ensembl" id="ENST00000265643.4">
    <property type="protein sequence ID" value="ENSP00000265643.3"/>
    <property type="gene ID" value="ENSG00000069482.7"/>
</dbReference>
<dbReference type="GeneID" id="51083"/>
<dbReference type="KEGG" id="hsa:51083"/>
<dbReference type="MANE-Select" id="ENST00000265643.4">
    <property type="protein sequence ID" value="ENSP00000265643.3"/>
    <property type="RefSeq nucleotide sequence ID" value="NM_015973.5"/>
    <property type="RefSeq protein sequence ID" value="NP_057057.2"/>
</dbReference>
<dbReference type="UCSC" id="uc001oob.4">
    <property type="organism name" value="human"/>
</dbReference>
<dbReference type="AGR" id="HGNC:4114"/>
<dbReference type="CTD" id="51083"/>
<dbReference type="DisGeNET" id="51083"/>
<dbReference type="GeneCards" id="GAL"/>
<dbReference type="HGNC" id="HGNC:4114">
    <property type="gene designation" value="GAL"/>
</dbReference>
<dbReference type="HPA" id="ENSG00000069482">
    <property type="expression patterns" value="Tissue enriched (pituitary)"/>
</dbReference>
<dbReference type="MalaCards" id="GAL"/>
<dbReference type="MIM" id="137035">
    <property type="type" value="gene"/>
</dbReference>
<dbReference type="MIM" id="616461">
    <property type="type" value="phenotype"/>
</dbReference>
<dbReference type="neXtProt" id="NX_P22466"/>
<dbReference type="OpenTargets" id="ENSG00000069482"/>
<dbReference type="PharmGKB" id="PA28529"/>
<dbReference type="VEuPathDB" id="HostDB:ENSG00000069482"/>
<dbReference type="eggNOG" id="ENOG502RZ1E">
    <property type="taxonomic scope" value="Eukaryota"/>
</dbReference>
<dbReference type="GeneTree" id="ENSGT00390000009663"/>
<dbReference type="HOGENOM" id="CLU_166244_0_0_1"/>
<dbReference type="InParanoid" id="P22466"/>
<dbReference type="OMA" id="PHAVDSH"/>
<dbReference type="OrthoDB" id="8721537at2759"/>
<dbReference type="PAN-GO" id="P22466">
    <property type="GO annotations" value="5 GO annotations based on evolutionary models"/>
</dbReference>
<dbReference type="PhylomeDB" id="P22466"/>
<dbReference type="TreeFam" id="TF335850"/>
<dbReference type="PathwayCommons" id="P22466"/>
<dbReference type="Reactome" id="R-HSA-375276">
    <property type="pathway name" value="Peptide ligand-binding receptors"/>
</dbReference>
<dbReference type="Reactome" id="R-HSA-418594">
    <property type="pathway name" value="G alpha (i) signalling events"/>
</dbReference>
<dbReference type="SignaLink" id="P22466"/>
<dbReference type="SIGNOR" id="P22466"/>
<dbReference type="BioGRID-ORCS" id="51083">
    <property type="hits" value="22 hits in 1154 CRISPR screens"/>
</dbReference>
<dbReference type="ChiTaRS" id="GAL">
    <property type="organism name" value="human"/>
</dbReference>
<dbReference type="GeneWiki" id="Galanin"/>
<dbReference type="GenomeRNAi" id="51083"/>
<dbReference type="Pharos" id="P22466">
    <property type="development level" value="Tbio"/>
</dbReference>
<dbReference type="PRO" id="PR:P22466"/>
<dbReference type="Proteomes" id="UP000005640">
    <property type="component" value="Chromosome 11"/>
</dbReference>
<dbReference type="RNAct" id="P22466">
    <property type="molecule type" value="protein"/>
</dbReference>
<dbReference type="Bgee" id="ENSG00000069482">
    <property type="expression patterns" value="Expressed in adenohypophysis and 105 other cell types or tissues"/>
</dbReference>
<dbReference type="GO" id="GO:0005576">
    <property type="term" value="C:extracellular region"/>
    <property type="evidence" value="ECO:0000304"/>
    <property type="project" value="Reactome"/>
</dbReference>
<dbReference type="GO" id="GO:0005615">
    <property type="term" value="C:extracellular space"/>
    <property type="evidence" value="ECO:0000314"/>
    <property type="project" value="UniProtKB"/>
</dbReference>
<dbReference type="GO" id="GO:0043025">
    <property type="term" value="C:neuronal cell body"/>
    <property type="evidence" value="ECO:0000314"/>
    <property type="project" value="UniProtKB"/>
</dbReference>
<dbReference type="GO" id="GO:0030141">
    <property type="term" value="C:secretory granule"/>
    <property type="evidence" value="ECO:0000318"/>
    <property type="project" value="GO_Central"/>
</dbReference>
<dbReference type="GO" id="GO:0004966">
    <property type="term" value="F:galanin receptor activity"/>
    <property type="evidence" value="ECO:0000315"/>
    <property type="project" value="UniProtKB"/>
</dbReference>
<dbReference type="GO" id="GO:0031763">
    <property type="term" value="F:galanin receptor binding"/>
    <property type="evidence" value="ECO:0000318"/>
    <property type="project" value="GO_Central"/>
</dbReference>
<dbReference type="GO" id="GO:0005184">
    <property type="term" value="F:neuropeptide hormone activity"/>
    <property type="evidence" value="ECO:0000314"/>
    <property type="project" value="UniProtKB"/>
</dbReference>
<dbReference type="GO" id="GO:0031764">
    <property type="term" value="F:type 1 galanin receptor binding"/>
    <property type="evidence" value="ECO:0000314"/>
    <property type="project" value="UniProtKB"/>
</dbReference>
<dbReference type="GO" id="GO:0031765">
    <property type="term" value="F:type 2 galanin receptor binding"/>
    <property type="evidence" value="ECO:0000314"/>
    <property type="project" value="UniProtKB"/>
</dbReference>
<dbReference type="GO" id="GO:0031766">
    <property type="term" value="F:type 3 galanin receptor binding"/>
    <property type="evidence" value="ECO:0000314"/>
    <property type="project" value="UniProtKB"/>
</dbReference>
<dbReference type="GO" id="GO:0007631">
    <property type="term" value="P:feeding behavior"/>
    <property type="evidence" value="ECO:0007669"/>
    <property type="project" value="Ensembl"/>
</dbReference>
<dbReference type="GO" id="GO:0030073">
    <property type="term" value="P:insulin secretion"/>
    <property type="evidence" value="ECO:0000303"/>
    <property type="project" value="UniProtKB"/>
</dbReference>
<dbReference type="GO" id="GO:0050672">
    <property type="term" value="P:negative regulation of lymphocyte proliferation"/>
    <property type="evidence" value="ECO:0007669"/>
    <property type="project" value="Ensembl"/>
</dbReference>
<dbReference type="GO" id="GO:0007399">
    <property type="term" value="P:nervous system development"/>
    <property type="evidence" value="ECO:0007669"/>
    <property type="project" value="Ensembl"/>
</dbReference>
<dbReference type="GO" id="GO:0007218">
    <property type="term" value="P:neuropeptide signaling pathway"/>
    <property type="evidence" value="ECO:0000318"/>
    <property type="project" value="GO_Central"/>
</dbReference>
<dbReference type="GO" id="GO:0060746">
    <property type="term" value="P:parental behavior"/>
    <property type="evidence" value="ECO:0007669"/>
    <property type="project" value="Ensembl"/>
</dbReference>
<dbReference type="GO" id="GO:0043065">
    <property type="term" value="P:positive regulation of apoptotic process"/>
    <property type="evidence" value="ECO:0007669"/>
    <property type="project" value="Ensembl"/>
</dbReference>
<dbReference type="GO" id="GO:0051464">
    <property type="term" value="P:positive regulation of cortisol secretion"/>
    <property type="evidence" value="ECO:0000314"/>
    <property type="project" value="UniProtKB"/>
</dbReference>
<dbReference type="GO" id="GO:1902608">
    <property type="term" value="P:positive regulation of large conductance calcium-activated potassium channel activity"/>
    <property type="evidence" value="ECO:0000314"/>
    <property type="project" value="UniProtKB"/>
</dbReference>
<dbReference type="GO" id="GO:0051795">
    <property type="term" value="P:positive regulation of timing of catagen"/>
    <property type="evidence" value="ECO:0000314"/>
    <property type="project" value="UniProtKB"/>
</dbReference>
<dbReference type="GO" id="GO:0045944">
    <property type="term" value="P:positive regulation of transcription by RNA polymerase II"/>
    <property type="evidence" value="ECO:0000314"/>
    <property type="project" value="UniProtKB"/>
</dbReference>
<dbReference type="GO" id="GO:0010737">
    <property type="term" value="P:protein kinase A signaling"/>
    <property type="evidence" value="ECO:0000314"/>
    <property type="project" value="UniProtKB"/>
</dbReference>
<dbReference type="GO" id="GO:0031943">
    <property type="term" value="P:regulation of glucocorticoid metabolic process"/>
    <property type="evidence" value="ECO:0007669"/>
    <property type="project" value="Ensembl"/>
</dbReference>
<dbReference type="GO" id="GO:0043627">
    <property type="term" value="P:response to estrogen"/>
    <property type="evidence" value="ECO:0007669"/>
    <property type="project" value="Ensembl"/>
</dbReference>
<dbReference type="GO" id="GO:0035902">
    <property type="term" value="P:response to immobilization stress"/>
    <property type="evidence" value="ECO:0007669"/>
    <property type="project" value="Ensembl"/>
</dbReference>
<dbReference type="GO" id="GO:0032868">
    <property type="term" value="P:response to insulin"/>
    <property type="evidence" value="ECO:0007669"/>
    <property type="project" value="Ensembl"/>
</dbReference>
<dbReference type="GO" id="GO:0009410">
    <property type="term" value="P:response to xenobiotic stimulus"/>
    <property type="evidence" value="ECO:0007669"/>
    <property type="project" value="Ensembl"/>
</dbReference>
<dbReference type="InterPro" id="IPR008174">
    <property type="entry name" value="Galanin"/>
</dbReference>
<dbReference type="InterPro" id="IPR008175">
    <property type="entry name" value="Galanin_pre"/>
</dbReference>
<dbReference type="InterPro" id="IPR013068">
    <property type="entry name" value="GMAP"/>
</dbReference>
<dbReference type="PANTHER" id="PTHR16839">
    <property type="entry name" value="GALANIN"/>
    <property type="match status" value="1"/>
</dbReference>
<dbReference type="PANTHER" id="PTHR16839:SF1">
    <property type="entry name" value="GALANIN PEPTIDES"/>
    <property type="match status" value="1"/>
</dbReference>
<dbReference type="Pfam" id="PF01296">
    <property type="entry name" value="Galanin"/>
    <property type="match status" value="1"/>
</dbReference>
<dbReference type="Pfam" id="PF06540">
    <property type="entry name" value="GMAP"/>
    <property type="match status" value="1"/>
</dbReference>
<dbReference type="PRINTS" id="PR00273">
    <property type="entry name" value="GALANIN"/>
</dbReference>
<dbReference type="SMART" id="SM00071">
    <property type="entry name" value="Galanin"/>
    <property type="match status" value="1"/>
</dbReference>
<dbReference type="PROSITE" id="PS00861">
    <property type="entry name" value="GALANIN"/>
    <property type="match status" value="1"/>
</dbReference>
<name>GALA_HUMAN</name>
<feature type="signal peptide" evidence="1">
    <location>
        <begin position="1"/>
        <end position="19"/>
    </location>
</feature>
<feature type="propeptide" id="PRO_0000010448">
    <location>
        <begin position="20"/>
        <end position="30"/>
    </location>
</feature>
<feature type="peptide" id="PRO_0000010449" description="Galanin">
    <location>
        <begin position="33"/>
        <end position="62"/>
    </location>
</feature>
<feature type="peptide" id="PRO_0000010450" description="Galanin message-associated peptide">
    <location>
        <begin position="65"/>
        <end position="123"/>
    </location>
</feature>
<feature type="region of interest" description="Disordered" evidence="2">
    <location>
        <begin position="46"/>
        <end position="80"/>
    </location>
</feature>
<feature type="compositionally biased region" description="Basic and acidic residues" evidence="2">
    <location>
        <begin position="62"/>
        <end position="73"/>
    </location>
</feature>
<feature type="modified residue" description="Phosphoserine" evidence="9">
    <location>
        <position position="116"/>
    </location>
</feature>
<feature type="modified residue" description="Phosphoserine" evidence="4 8">
    <location>
        <position position="117"/>
    </location>
</feature>
<feature type="sequence variant" id="VAR_049121" description="In dbSNP:rs34725707.">
    <original>A</original>
    <variation>V</variation>
    <location>
        <position position="16"/>
    </location>
</feature>
<feature type="sequence variant" id="VAR_074671" description="In ETL8; decreased affinity for GALR2; but no effect on affinity for GALR1 and GALR3; decreased activity in GALR2-mediated signaling; dominant-negative that inhibits GALR1-mediated signaling; dbSNP:rs1057517661." evidence="6">
    <original>A</original>
    <variation>E</variation>
    <location>
        <position position="39"/>
    </location>
</feature>
<feature type="helix" evidence="10">
    <location>
        <begin position="36"/>
        <end position="43"/>
    </location>
</feature>
<feature type="helix" evidence="11">
    <location>
        <begin position="45"/>
        <end position="48"/>
    </location>
</feature>